<organism>
    <name type="scientific">Mus musculus</name>
    <name type="common">Mouse</name>
    <dbReference type="NCBI Taxonomy" id="10090"/>
    <lineage>
        <taxon>Eukaryota</taxon>
        <taxon>Metazoa</taxon>
        <taxon>Chordata</taxon>
        <taxon>Craniata</taxon>
        <taxon>Vertebrata</taxon>
        <taxon>Euteleostomi</taxon>
        <taxon>Mammalia</taxon>
        <taxon>Eutheria</taxon>
        <taxon>Euarchontoglires</taxon>
        <taxon>Glires</taxon>
        <taxon>Rodentia</taxon>
        <taxon>Myomorpha</taxon>
        <taxon>Muroidea</taxon>
        <taxon>Muridae</taxon>
        <taxon>Murinae</taxon>
        <taxon>Mus</taxon>
        <taxon>Mus</taxon>
    </lineage>
</organism>
<proteinExistence type="evidence at protein level"/>
<protein>
    <recommendedName>
        <fullName evidence="13">Prolyl hydroxylase EGLN2</fullName>
        <ecNumber evidence="14">1.14.11.-</ecNumber>
    </recommendedName>
    <alternativeName>
        <fullName evidence="13">Egl nine homolog 2</fullName>
        <ecNumber evidence="1 3">1.14.11.29</ecNumber>
    </alternativeName>
    <alternativeName>
        <fullName evidence="11">Falkor</fullName>
    </alternativeName>
    <alternativeName>
        <fullName>Hypoxia-inducible factor prolyl hydroxylase 1</fullName>
        <shortName>HIF-PH1</shortName>
        <shortName>HIF-prolyl hydroxylase 1</shortName>
        <shortName>HPH-1</shortName>
    </alternativeName>
    <alternativeName>
        <fullName evidence="12">Prolyl hydroxylase domain-containing protein 1</fullName>
        <shortName evidence="12">PHD1</shortName>
    </alternativeName>
</protein>
<keyword id="KW-0223">Dioxygenase</keyword>
<keyword id="KW-0408">Iron</keyword>
<keyword id="KW-0479">Metal-binding</keyword>
<keyword id="KW-0539">Nucleus</keyword>
<keyword id="KW-0560">Oxidoreductase</keyword>
<keyword id="KW-0597">Phosphoprotein</keyword>
<keyword id="KW-1185">Reference proteome</keyword>
<keyword id="KW-0832">Ubl conjugation</keyword>
<keyword id="KW-0847">Vitamin C</keyword>
<reference key="1">
    <citation type="journal article" date="2001" name="Gene">
        <title>Characterization and comparative analysis of the EGLN gene family.</title>
        <authorList>
            <person name="Taylor M.S."/>
        </authorList>
    </citation>
    <scope>NUCLEOTIDE SEQUENCE [MRNA]</scope>
</reference>
<reference key="2">
    <citation type="journal article" date="2002" name="Biochem. Cell Biol.">
        <title>Mammalian EGLN genes have distinct patterns of mRNA expression and regulation.</title>
        <authorList>
            <person name="Lieb M.E."/>
            <person name="Menzies K."/>
            <person name="Moschella M.C."/>
            <person name="Ni R."/>
            <person name="Taubman M.B."/>
        </authorList>
    </citation>
    <scope>NUCLEOTIDE SEQUENCE [MRNA]</scope>
    <scope>TISSUE SPECIFICITY</scope>
    <source>
        <strain>C57BL/6 X DBA/2</strain>
    </source>
</reference>
<reference key="3">
    <citation type="journal article" date="2002" name="Oncogene">
        <title>Falkor, a novel cell growth regulator isolated by a functional genetic screen.</title>
        <authorList>
            <person name="Erez N."/>
            <person name="Milyavsky M."/>
            <person name="Goldfinger N."/>
            <person name="Peles E."/>
            <person name="Gudkov A.V."/>
            <person name="Rotter V."/>
        </authorList>
    </citation>
    <scope>NUCLEOTIDE SEQUENCE [MRNA]</scope>
    <scope>SUBCELLULAR LOCATION</scope>
    <source>
        <strain>BALB/cJ</strain>
    </source>
</reference>
<reference key="4">
    <citation type="journal article" date="2005" name="Science">
        <title>The transcriptional landscape of the mammalian genome.</title>
        <authorList>
            <person name="Carninci P."/>
            <person name="Kasukawa T."/>
            <person name="Katayama S."/>
            <person name="Gough J."/>
            <person name="Frith M.C."/>
            <person name="Maeda N."/>
            <person name="Oyama R."/>
            <person name="Ravasi T."/>
            <person name="Lenhard B."/>
            <person name="Wells C."/>
            <person name="Kodzius R."/>
            <person name="Shimokawa K."/>
            <person name="Bajic V.B."/>
            <person name="Brenner S.E."/>
            <person name="Batalov S."/>
            <person name="Forrest A.R."/>
            <person name="Zavolan M."/>
            <person name="Davis M.J."/>
            <person name="Wilming L.G."/>
            <person name="Aidinis V."/>
            <person name="Allen J.E."/>
            <person name="Ambesi-Impiombato A."/>
            <person name="Apweiler R."/>
            <person name="Aturaliya R.N."/>
            <person name="Bailey T.L."/>
            <person name="Bansal M."/>
            <person name="Baxter L."/>
            <person name="Beisel K.W."/>
            <person name="Bersano T."/>
            <person name="Bono H."/>
            <person name="Chalk A.M."/>
            <person name="Chiu K.P."/>
            <person name="Choudhary V."/>
            <person name="Christoffels A."/>
            <person name="Clutterbuck D.R."/>
            <person name="Crowe M.L."/>
            <person name="Dalla E."/>
            <person name="Dalrymple B.P."/>
            <person name="de Bono B."/>
            <person name="Della Gatta G."/>
            <person name="di Bernardo D."/>
            <person name="Down T."/>
            <person name="Engstrom P."/>
            <person name="Fagiolini M."/>
            <person name="Faulkner G."/>
            <person name="Fletcher C.F."/>
            <person name="Fukushima T."/>
            <person name="Furuno M."/>
            <person name="Futaki S."/>
            <person name="Gariboldi M."/>
            <person name="Georgii-Hemming P."/>
            <person name="Gingeras T.R."/>
            <person name="Gojobori T."/>
            <person name="Green R.E."/>
            <person name="Gustincich S."/>
            <person name="Harbers M."/>
            <person name="Hayashi Y."/>
            <person name="Hensch T.K."/>
            <person name="Hirokawa N."/>
            <person name="Hill D."/>
            <person name="Huminiecki L."/>
            <person name="Iacono M."/>
            <person name="Ikeo K."/>
            <person name="Iwama A."/>
            <person name="Ishikawa T."/>
            <person name="Jakt M."/>
            <person name="Kanapin A."/>
            <person name="Katoh M."/>
            <person name="Kawasawa Y."/>
            <person name="Kelso J."/>
            <person name="Kitamura H."/>
            <person name="Kitano H."/>
            <person name="Kollias G."/>
            <person name="Krishnan S.P."/>
            <person name="Kruger A."/>
            <person name="Kummerfeld S.K."/>
            <person name="Kurochkin I.V."/>
            <person name="Lareau L.F."/>
            <person name="Lazarevic D."/>
            <person name="Lipovich L."/>
            <person name="Liu J."/>
            <person name="Liuni S."/>
            <person name="McWilliam S."/>
            <person name="Madan Babu M."/>
            <person name="Madera M."/>
            <person name="Marchionni L."/>
            <person name="Matsuda H."/>
            <person name="Matsuzawa S."/>
            <person name="Miki H."/>
            <person name="Mignone F."/>
            <person name="Miyake S."/>
            <person name="Morris K."/>
            <person name="Mottagui-Tabar S."/>
            <person name="Mulder N."/>
            <person name="Nakano N."/>
            <person name="Nakauchi H."/>
            <person name="Ng P."/>
            <person name="Nilsson R."/>
            <person name="Nishiguchi S."/>
            <person name="Nishikawa S."/>
            <person name="Nori F."/>
            <person name="Ohara O."/>
            <person name="Okazaki Y."/>
            <person name="Orlando V."/>
            <person name="Pang K.C."/>
            <person name="Pavan W.J."/>
            <person name="Pavesi G."/>
            <person name="Pesole G."/>
            <person name="Petrovsky N."/>
            <person name="Piazza S."/>
            <person name="Reed J."/>
            <person name="Reid J.F."/>
            <person name="Ring B.Z."/>
            <person name="Ringwald M."/>
            <person name="Rost B."/>
            <person name="Ruan Y."/>
            <person name="Salzberg S.L."/>
            <person name="Sandelin A."/>
            <person name="Schneider C."/>
            <person name="Schoenbach C."/>
            <person name="Sekiguchi K."/>
            <person name="Semple C.A."/>
            <person name="Seno S."/>
            <person name="Sessa L."/>
            <person name="Sheng Y."/>
            <person name="Shibata Y."/>
            <person name="Shimada H."/>
            <person name="Shimada K."/>
            <person name="Silva D."/>
            <person name="Sinclair B."/>
            <person name="Sperling S."/>
            <person name="Stupka E."/>
            <person name="Sugiura K."/>
            <person name="Sultana R."/>
            <person name="Takenaka Y."/>
            <person name="Taki K."/>
            <person name="Tammoja K."/>
            <person name="Tan S.L."/>
            <person name="Tang S."/>
            <person name="Taylor M.S."/>
            <person name="Tegner J."/>
            <person name="Teichmann S.A."/>
            <person name="Ueda H.R."/>
            <person name="van Nimwegen E."/>
            <person name="Verardo R."/>
            <person name="Wei C.L."/>
            <person name="Yagi K."/>
            <person name="Yamanishi H."/>
            <person name="Zabarovsky E."/>
            <person name="Zhu S."/>
            <person name="Zimmer A."/>
            <person name="Hide W."/>
            <person name="Bult C."/>
            <person name="Grimmond S.M."/>
            <person name="Teasdale R.D."/>
            <person name="Liu E.T."/>
            <person name="Brusic V."/>
            <person name="Quackenbush J."/>
            <person name="Wahlestedt C."/>
            <person name="Mattick J.S."/>
            <person name="Hume D.A."/>
            <person name="Kai C."/>
            <person name="Sasaki D."/>
            <person name="Tomaru Y."/>
            <person name="Fukuda S."/>
            <person name="Kanamori-Katayama M."/>
            <person name="Suzuki M."/>
            <person name="Aoki J."/>
            <person name="Arakawa T."/>
            <person name="Iida J."/>
            <person name="Imamura K."/>
            <person name="Itoh M."/>
            <person name="Kato T."/>
            <person name="Kawaji H."/>
            <person name="Kawagashira N."/>
            <person name="Kawashima T."/>
            <person name="Kojima M."/>
            <person name="Kondo S."/>
            <person name="Konno H."/>
            <person name="Nakano K."/>
            <person name="Ninomiya N."/>
            <person name="Nishio T."/>
            <person name="Okada M."/>
            <person name="Plessy C."/>
            <person name="Shibata K."/>
            <person name="Shiraki T."/>
            <person name="Suzuki S."/>
            <person name="Tagami M."/>
            <person name="Waki K."/>
            <person name="Watahiki A."/>
            <person name="Okamura-Oho Y."/>
            <person name="Suzuki H."/>
            <person name="Kawai J."/>
            <person name="Hayashizaki Y."/>
        </authorList>
    </citation>
    <scope>NUCLEOTIDE SEQUENCE [LARGE SCALE MRNA]</scope>
    <source>
        <strain>C57BL/6J</strain>
        <tissue>Kidney</tissue>
    </source>
</reference>
<reference key="5">
    <citation type="journal article" date="2004" name="Genome Res.">
        <title>The status, quality, and expansion of the NIH full-length cDNA project: the Mammalian Gene Collection (MGC).</title>
        <authorList>
            <consortium name="The MGC Project Team"/>
        </authorList>
    </citation>
    <scope>NUCLEOTIDE SEQUENCE [LARGE SCALE MRNA]</scope>
    <source>
        <strain>FVB/N</strain>
        <tissue>Liver</tissue>
    </source>
</reference>
<reference key="6">
    <citation type="journal article" date="2008" name="Nat. Genet.">
        <title>Deficiency or inhibition of oxygen sensor Phd1 induces hypoxia tolerance by reprogramming basal metabolism.</title>
        <authorList>
            <person name="Aragones J."/>
            <person name="Schneider M."/>
            <person name="Van Geyte K."/>
            <person name="Fraisl P."/>
            <person name="Dresselaers T."/>
            <person name="Mazzone M."/>
            <person name="Dirkx R."/>
            <person name="Zacchigna S."/>
            <person name="Lemieux H."/>
            <person name="Jeoung N.H."/>
            <person name="Lambrechts D."/>
            <person name="Bishop T."/>
            <person name="Lafuste P."/>
            <person name="Diez-Juan A."/>
            <person name="Harten S.K."/>
            <person name="Van Noten P."/>
            <person name="De Bock K."/>
            <person name="Willam C."/>
            <person name="Tjwa M."/>
            <person name="Grosfeld A."/>
            <person name="Navet R."/>
            <person name="Moons L."/>
            <person name="Vandendriessche T."/>
            <person name="Deroose C."/>
            <person name="Wijeyekoon B."/>
            <person name="Nuyts J."/>
            <person name="Jordan B."/>
            <person name="Silasi-Mansat R."/>
            <person name="Lupu F."/>
            <person name="Dewerchin M."/>
            <person name="Pugh C."/>
            <person name="Salmon P."/>
            <person name="Mortelmans L."/>
            <person name="Gallez B."/>
            <person name="Gorus F."/>
            <person name="Buyse J."/>
            <person name="Sluse F."/>
            <person name="Harris R.A."/>
            <person name="Gnaiger E."/>
            <person name="Hespel P."/>
            <person name="Van Hecke P."/>
            <person name="Schuit F."/>
            <person name="Van Veldhoven P."/>
            <person name="Ratcliffe P."/>
            <person name="Baes M."/>
            <person name="Maxwell P."/>
            <person name="Carmeliet P."/>
        </authorList>
    </citation>
    <scope>DISRUPTION PHENOTYPE</scope>
    <scope>FUNCTION</scope>
</reference>
<reference key="7">
    <citation type="journal article" date="2009" name="J. Neurosci.">
        <title>Selective inhibition of hypoxia-inducible factor (HIF) prolyl-hydroxylase 1 mediates neuroprotection against normoxic oxidative death via HIF- and CREB-independent pathways.</title>
        <authorList>
            <person name="Siddiq A."/>
            <person name="Aminova L.R."/>
            <person name="Troy C.M."/>
            <person name="Suh K."/>
            <person name="Messer Z."/>
            <person name="Semenza G.L."/>
            <person name="Ratan R.R."/>
        </authorList>
    </citation>
    <scope>FUNCTION</scope>
</reference>
<reference key="8">
    <citation type="journal article" date="2011" name="Antioxid. Redox Signal.">
        <title>Disruption of hypoxia-inducible transcription factor-prolyl hydroxylase domain-1 (PHD-1-/-) attenuates ex vivo myocardial ischemia/reperfusion injury through hypoxia-inducible factor-1alpha transcription factor and its target genes in mice.</title>
        <authorList>
            <person name="Adluri R.S."/>
            <person name="Thirunavukkarasu M."/>
            <person name="Dunna N.R."/>
            <person name="Zhan L."/>
            <person name="Oriowo B."/>
            <person name="Takeda K."/>
            <person name="Sanchez J.A."/>
            <person name="Otani H."/>
            <person name="Maulik G."/>
            <person name="Fong G.H."/>
            <person name="Maulik N."/>
        </authorList>
    </citation>
    <scope>DISRUPTION PHENOTYPE</scope>
    <scope>FUNCTION</scope>
</reference>
<reference key="9">
    <citation type="journal article" date="2014" name="PLoS Genet.">
        <title>Fine tuning of the UPR by the ubiquitin ligases Siah1/2.</title>
        <authorList>
            <person name="Scortegagna M."/>
            <person name="Kim H."/>
            <person name="Li J.L."/>
            <person name="Yao H."/>
            <person name="Brill L.M."/>
            <person name="Han J."/>
            <person name="Lau E."/>
            <person name="Bowtell D."/>
            <person name="Haddad G."/>
            <person name="Kaufman R.J."/>
            <person name="Ronai Z.A."/>
        </authorList>
    </citation>
    <scope>FUNCTION</scope>
    <scope>CATALYTIC ACTIVITY</scope>
    <scope>UBIQUITINATION</scope>
</reference>
<accession>Q91YE2</accession>
<accession>Q8C6I4</accession>
<accession>Q8CIL9</accession>
<accession>Q8VHJ1</accession>
<accession>Q99MI0</accession>
<gene>
    <name evidence="15" type="primary">Egln2</name>
</gene>
<dbReference type="EC" id="1.14.11.-" evidence="14"/>
<dbReference type="EC" id="1.14.11.29" evidence="1 3"/>
<dbReference type="EMBL" id="AJ310547">
    <property type="protein sequence ID" value="CAC42516.1"/>
    <property type="status" value="ALT_FRAME"/>
    <property type="molecule type" value="mRNA"/>
</dbReference>
<dbReference type="EMBL" id="AF453879">
    <property type="protein sequence ID" value="AAL65166.1"/>
    <property type="molecule type" value="mRNA"/>
</dbReference>
<dbReference type="EMBL" id="AF340231">
    <property type="protein sequence ID" value="AAK37525.1"/>
    <property type="molecule type" value="mRNA"/>
</dbReference>
<dbReference type="EMBL" id="AK075582">
    <property type="protein sequence ID" value="BAC35835.1"/>
    <property type="molecule type" value="mRNA"/>
</dbReference>
<dbReference type="EMBL" id="BC023299">
    <property type="protein sequence ID" value="AAH23299.2"/>
    <property type="molecule type" value="mRNA"/>
</dbReference>
<dbReference type="CCDS" id="CCDS21011.1"/>
<dbReference type="RefSeq" id="NP_444438.2">
    <property type="nucleotide sequence ID" value="NM_053208.4"/>
</dbReference>
<dbReference type="RefSeq" id="XP_030097849.1">
    <property type="nucleotide sequence ID" value="XM_030241989.1"/>
</dbReference>
<dbReference type="RefSeq" id="XP_036008464.1">
    <property type="nucleotide sequence ID" value="XM_036152571.1"/>
</dbReference>
<dbReference type="SMR" id="Q91YE2"/>
<dbReference type="BioGRID" id="227482">
    <property type="interactions" value="3"/>
</dbReference>
<dbReference type="FunCoup" id="Q91YE2">
    <property type="interactions" value="2668"/>
</dbReference>
<dbReference type="STRING" id="10090.ENSMUSP00000078966"/>
<dbReference type="GlyGen" id="Q91YE2">
    <property type="glycosylation" value="2 sites, 1 O-linked glycan (2 sites)"/>
</dbReference>
<dbReference type="iPTMnet" id="Q91YE2"/>
<dbReference type="PhosphoSitePlus" id="Q91YE2"/>
<dbReference type="PaxDb" id="10090-ENSMUSP00000078966"/>
<dbReference type="ProteomicsDB" id="277803"/>
<dbReference type="Antibodypedia" id="66726">
    <property type="antibodies" value="440 antibodies from 32 providers"/>
</dbReference>
<dbReference type="DNASU" id="112406"/>
<dbReference type="Ensembl" id="ENSMUST00000080058.11">
    <property type="protein sequence ID" value="ENSMUSP00000078966.5"/>
    <property type="gene ID" value="ENSMUSG00000058709.12"/>
</dbReference>
<dbReference type="Ensembl" id="ENSMUST00000108382.2">
    <property type="protein sequence ID" value="ENSMUSP00000104019.2"/>
    <property type="gene ID" value="ENSMUSG00000058709.12"/>
</dbReference>
<dbReference type="GeneID" id="112406"/>
<dbReference type="KEGG" id="mmu:112406"/>
<dbReference type="UCSC" id="uc009fva.2">
    <property type="organism name" value="mouse"/>
</dbReference>
<dbReference type="AGR" id="MGI:1932287"/>
<dbReference type="CTD" id="112398"/>
<dbReference type="MGI" id="MGI:1932287">
    <property type="gene designation" value="Egln2"/>
</dbReference>
<dbReference type="VEuPathDB" id="HostDB:ENSMUSG00000058709"/>
<dbReference type="eggNOG" id="KOG3710">
    <property type="taxonomic scope" value="Eukaryota"/>
</dbReference>
<dbReference type="GeneTree" id="ENSGT00940000160655"/>
<dbReference type="HOGENOM" id="CLU_063064_0_0_1"/>
<dbReference type="InParanoid" id="Q91YE2"/>
<dbReference type="OMA" id="AWQTACP"/>
<dbReference type="OrthoDB" id="5952526at2759"/>
<dbReference type="PhylomeDB" id="Q91YE2"/>
<dbReference type="TreeFam" id="TF314595"/>
<dbReference type="BRENDA" id="1.14.11.29">
    <property type="organism ID" value="3474"/>
</dbReference>
<dbReference type="Reactome" id="R-MMU-1234176">
    <property type="pathway name" value="Oxygen-dependent proline hydroxylation of Hypoxia-inducible Factor Alpha"/>
</dbReference>
<dbReference type="BioGRID-ORCS" id="112406">
    <property type="hits" value="2 hits in 80 CRISPR screens"/>
</dbReference>
<dbReference type="ChiTaRS" id="Egln2">
    <property type="organism name" value="mouse"/>
</dbReference>
<dbReference type="PRO" id="PR:Q91YE2"/>
<dbReference type="Proteomes" id="UP000000589">
    <property type="component" value="Chromosome 7"/>
</dbReference>
<dbReference type="RNAct" id="Q91YE2">
    <property type="molecule type" value="protein"/>
</dbReference>
<dbReference type="Bgee" id="ENSMUSG00000058709">
    <property type="expression patterns" value="Expressed in seminiferous tubule of testis and 263 other cell types or tissues"/>
</dbReference>
<dbReference type="ExpressionAtlas" id="Q91YE2">
    <property type="expression patterns" value="baseline and differential"/>
</dbReference>
<dbReference type="GO" id="GO:0005654">
    <property type="term" value="C:nucleoplasm"/>
    <property type="evidence" value="ECO:0007669"/>
    <property type="project" value="Ensembl"/>
</dbReference>
<dbReference type="GO" id="GO:0005634">
    <property type="term" value="C:nucleus"/>
    <property type="evidence" value="ECO:0000250"/>
    <property type="project" value="UniProtKB"/>
</dbReference>
<dbReference type="GO" id="GO:0016706">
    <property type="term" value="F:2-oxoglutarate-dependent dioxygenase activity"/>
    <property type="evidence" value="ECO:0000250"/>
    <property type="project" value="UniProtKB"/>
</dbReference>
<dbReference type="GO" id="GO:0008198">
    <property type="term" value="F:ferrous iron binding"/>
    <property type="evidence" value="ECO:0000250"/>
    <property type="project" value="UniProtKB"/>
</dbReference>
<dbReference type="GO" id="GO:0160082">
    <property type="term" value="F:hypoxia-inducible factor-proline dioxygenase activity"/>
    <property type="evidence" value="ECO:0007669"/>
    <property type="project" value="UniProtKB-EC"/>
</dbReference>
<dbReference type="GO" id="GO:0031418">
    <property type="term" value="F:L-ascorbic acid binding"/>
    <property type="evidence" value="ECO:0007669"/>
    <property type="project" value="UniProtKB-KW"/>
</dbReference>
<dbReference type="GO" id="GO:0019826">
    <property type="term" value="F:oxygen sensor activity"/>
    <property type="evidence" value="ECO:0000250"/>
    <property type="project" value="UniProtKB"/>
</dbReference>
<dbReference type="GO" id="GO:0031545">
    <property type="term" value="F:peptidyl-proline 4-dioxygenase activity"/>
    <property type="evidence" value="ECO:0000250"/>
    <property type="project" value="UniProtKB"/>
</dbReference>
<dbReference type="GO" id="GO:0045454">
    <property type="term" value="P:cell redox homeostasis"/>
    <property type="evidence" value="ECO:0000250"/>
    <property type="project" value="UniProtKB"/>
</dbReference>
<dbReference type="GO" id="GO:0018401">
    <property type="term" value="P:peptidyl-proline hydroxylation to 4-hydroxy-L-proline"/>
    <property type="evidence" value="ECO:0000250"/>
    <property type="project" value="UniProtKB"/>
</dbReference>
<dbReference type="GO" id="GO:0045732">
    <property type="term" value="P:positive regulation of protein catabolic process"/>
    <property type="evidence" value="ECO:0000250"/>
    <property type="project" value="UniProtKB"/>
</dbReference>
<dbReference type="GO" id="GO:0043523">
    <property type="term" value="P:regulation of neuron apoptotic process"/>
    <property type="evidence" value="ECO:0000250"/>
    <property type="project" value="UniProtKB"/>
</dbReference>
<dbReference type="GO" id="GO:0001666">
    <property type="term" value="P:response to hypoxia"/>
    <property type="evidence" value="ECO:0000250"/>
    <property type="project" value="UniProtKB"/>
</dbReference>
<dbReference type="FunFam" id="2.60.120.620:FF:000005">
    <property type="entry name" value="Egl nine homolog 1"/>
    <property type="match status" value="1"/>
</dbReference>
<dbReference type="Gene3D" id="2.60.120.620">
    <property type="entry name" value="q2cbj1_9rhob like domain"/>
    <property type="match status" value="1"/>
</dbReference>
<dbReference type="InterPro" id="IPR051559">
    <property type="entry name" value="HIF_prolyl_hydroxylases"/>
</dbReference>
<dbReference type="InterPro" id="IPR005123">
    <property type="entry name" value="Oxoglu/Fe-dep_dioxygenase_dom"/>
</dbReference>
<dbReference type="InterPro" id="IPR006620">
    <property type="entry name" value="Pro_4_hyd_alph"/>
</dbReference>
<dbReference type="InterPro" id="IPR044862">
    <property type="entry name" value="Pro_4_hyd_alph_FE2OG_OXY"/>
</dbReference>
<dbReference type="PANTHER" id="PTHR12907">
    <property type="entry name" value="EGL NINE HOMOLOG-RELATED"/>
    <property type="match status" value="1"/>
</dbReference>
<dbReference type="PANTHER" id="PTHR12907:SF6">
    <property type="entry name" value="PROLYL HYDROXYLASE EGLN2"/>
    <property type="match status" value="1"/>
</dbReference>
<dbReference type="Pfam" id="PF13640">
    <property type="entry name" value="2OG-FeII_Oxy_3"/>
    <property type="match status" value="1"/>
</dbReference>
<dbReference type="SMART" id="SM00702">
    <property type="entry name" value="P4Hc"/>
    <property type="match status" value="1"/>
</dbReference>
<dbReference type="PROSITE" id="PS51471">
    <property type="entry name" value="FE2OG_OXY"/>
    <property type="match status" value="1"/>
</dbReference>
<name>EGLN2_MOUSE</name>
<feature type="chain" id="PRO_0000206665" description="Prolyl hydroxylase EGLN2">
    <location>
        <begin position="1"/>
        <end position="419"/>
    </location>
</feature>
<feature type="domain" description="Fe2OG dioxygenase" evidence="3">
    <location>
        <begin position="290"/>
        <end position="388"/>
    </location>
</feature>
<feature type="region of interest" description="Disordered" evidence="4">
    <location>
        <begin position="1"/>
        <end position="89"/>
    </location>
</feature>
<feature type="region of interest" description="Disordered" evidence="4">
    <location>
        <begin position="108"/>
        <end position="181"/>
    </location>
</feature>
<feature type="region of interest" description="Beta(2)beta(3) 'finger-like' loop" evidence="2">
    <location>
        <begin position="237"/>
        <end position="247"/>
    </location>
</feature>
<feature type="short sequence motif" description="Bipartite nuclear localization signal" evidence="1">
    <location>
        <begin position="89"/>
        <end position="134"/>
    </location>
</feature>
<feature type="compositionally biased region" description="Low complexity" evidence="4">
    <location>
        <begin position="1"/>
        <end position="18"/>
    </location>
</feature>
<feature type="compositionally biased region" description="Low complexity" evidence="4">
    <location>
        <begin position="64"/>
        <end position="73"/>
    </location>
</feature>
<feature type="compositionally biased region" description="Basic and acidic residues" evidence="4">
    <location>
        <begin position="115"/>
        <end position="126"/>
    </location>
</feature>
<feature type="compositionally biased region" description="Low complexity" evidence="4">
    <location>
        <begin position="154"/>
        <end position="174"/>
    </location>
</feature>
<feature type="binding site" evidence="1 3">
    <location>
        <position position="309"/>
    </location>
    <ligand>
        <name>Fe cation</name>
        <dbReference type="ChEBI" id="CHEBI:24875"/>
    </ligand>
</feature>
<feature type="binding site" evidence="1 3">
    <location>
        <position position="311"/>
    </location>
    <ligand>
        <name>Fe cation</name>
        <dbReference type="ChEBI" id="CHEBI:24875"/>
    </ligand>
</feature>
<feature type="binding site" evidence="1 3">
    <location>
        <position position="370"/>
    </location>
    <ligand>
        <name>Fe cation</name>
        <dbReference type="ChEBI" id="CHEBI:24875"/>
    </ligand>
</feature>
<feature type="binding site" evidence="3">
    <location>
        <position position="379"/>
    </location>
    <ligand>
        <name>2-oxoglutarate</name>
        <dbReference type="ChEBI" id="CHEBI:16810"/>
    </ligand>
</feature>
<feature type="modified residue" description="Phosphoserine" evidence="1">
    <location>
        <position position="130"/>
    </location>
</feature>
<feature type="sequence conflict" description="In Ref. 4; BAC35835." evidence="13" ref="4">
    <original>Q</original>
    <variation>H</variation>
    <location>
        <position position="8"/>
    </location>
</feature>
<feature type="sequence conflict" description="In Ref. 4; BAC35835." evidence="13" ref="4">
    <original>L</original>
    <variation>C</variation>
    <location>
        <position position="10"/>
    </location>
</feature>
<feature type="sequence conflict" description="In Ref. 3; AAK37525." evidence="13" ref="3">
    <original>Q</original>
    <variation>K</variation>
    <location>
        <position position="92"/>
    </location>
</feature>
<comment type="function">
    <text evidence="1 7 8 9 10">Prolyl hydroxylase that mediates hydroxylation of proline residues in target proteins, such as ATF4, IKBKB, CEP192 and HIF1A (PubMed:24809345). Target proteins are preferentially recognized via a LXXLAP motif (By similarity). Cellular oxygen sensor that catalyzes, under normoxic conditions, the post-translational formation of 4-hydroxyproline in hypoxia-inducible factor (HIF) alpha proteins (PubMed:18176562, PubMed:19587290, PubMed:21083501). Hydroxylates a specific proline found in each of the oxygen-dependent degradation (ODD) domains (N-terminal, NODD, and C-terminal, CODD) of HIF1A (PubMed:18176562, PubMed:19587290, PubMed:21083501). Also hydroxylates HIF2A (PubMed:18176562, PubMed:19587290, PubMed:21083501). Has a preference for the CODD site for both HIF1A and HIF2A (PubMed:18176562, PubMed:19587290, PubMed:21083501). Hydroxylated HIFs are then targeted for proteasomal degradation via the von Hippel-Lindau ubiquitination complex (PubMed:18176562, PubMed:19587290, PubMed:21083501). Under hypoxic conditions, the hydroxylation reaction is attenuated allowing HIFs to escape degradation resulting in their translocation to the nucleus, heterodimerization with HIF1B, and increased expression of hypoxy-inducible genes (PubMed:18176562, PubMed:19587290, PubMed:21083501). EGLN2 is involved in regulating hypoxia tolerance and apoptosis in cardiac and skeletal muscle (PubMed:18176562, PubMed:19587290, PubMed:21083501). Also regulates susceptibility to normoxic oxidative neuronal death (PubMed:18176562, PubMed:19587290, PubMed:21083501). Links oxygen sensing to cell cycle and primary cilia formation by hydroxylating the critical centrosome component CEP192 which promotes its ubiquitination and subsequent proteasomal degradation (By similarity). Hydroxylates IKBKB, mediating NF-kappa-B activation in hypoxic conditions (By similarity). Also mediates hydroxylation of ATF4, leading to decreased protein stability of ATF4 (PubMed:24809345).</text>
</comment>
<comment type="catalytic activity">
    <reaction evidence="14">
        <text>L-prolyl-[protein] + 2-oxoglutarate + O2 = trans-4-hydroxy-L-prolyl-[protein] + succinate + CO2</text>
        <dbReference type="Rhea" id="RHEA:63484"/>
        <dbReference type="Rhea" id="RHEA-COMP:12408"/>
        <dbReference type="Rhea" id="RHEA-COMP:16354"/>
        <dbReference type="ChEBI" id="CHEBI:15379"/>
        <dbReference type="ChEBI" id="CHEBI:16526"/>
        <dbReference type="ChEBI" id="CHEBI:16810"/>
        <dbReference type="ChEBI" id="CHEBI:30031"/>
        <dbReference type="ChEBI" id="CHEBI:50342"/>
        <dbReference type="ChEBI" id="CHEBI:61965"/>
    </reaction>
    <physiologicalReaction direction="left-to-right" evidence="14">
        <dbReference type="Rhea" id="RHEA:63485"/>
    </physiologicalReaction>
</comment>
<comment type="catalytic activity">
    <reaction evidence="1">
        <text>L-prolyl-[hypoxia-inducible factor alpha subunit] + 2-oxoglutarate + O2 = trans-4-hydroxy-L-prolyl-[hypoxia-inducible factor alpha subunit] + succinate + CO2</text>
        <dbReference type="Rhea" id="RHEA:48400"/>
        <dbReference type="Rhea" id="RHEA-COMP:12093"/>
        <dbReference type="Rhea" id="RHEA-COMP:12094"/>
        <dbReference type="ChEBI" id="CHEBI:15379"/>
        <dbReference type="ChEBI" id="CHEBI:16526"/>
        <dbReference type="ChEBI" id="CHEBI:16810"/>
        <dbReference type="ChEBI" id="CHEBI:30031"/>
        <dbReference type="ChEBI" id="CHEBI:50342"/>
        <dbReference type="ChEBI" id="CHEBI:61965"/>
        <dbReference type="EC" id="1.14.11.29"/>
    </reaction>
</comment>
<comment type="cofactor">
    <cofactor evidence="1 3">
        <name>Fe(2+)</name>
        <dbReference type="ChEBI" id="CHEBI:29033"/>
    </cofactor>
    <text evidence="1 3">Binds 1 Fe(2+) ion per subunit.</text>
</comment>
<comment type="cofactor">
    <cofactor evidence="1">
        <name>L-ascorbate</name>
        <dbReference type="ChEBI" id="CHEBI:38290"/>
    </cofactor>
</comment>
<comment type="subunit">
    <text evidence="1">Interacts with E3 ligase SIAH2. Interacts with LIMD1, WTIP and AJUBA.</text>
</comment>
<comment type="subcellular location">
    <subcellularLocation>
        <location evidence="6">Nucleus</location>
    </subcellularLocation>
</comment>
<comment type="tissue specificity">
    <text evidence="5">Highly expressed in testis, expression was also detected in the heart brain, liver kidney and lung. Expression was lowest in spleen and skeletal muscle. Constitutively expressed during differentiation of C2C12 skeletal myocytes.</text>
</comment>
<comment type="domain">
    <text evidence="2">The Beta(2)beta(3) 'finger-like' loop domain is important for substrate (HIFs' CODD/NODD) selectivity.</text>
</comment>
<comment type="PTM">
    <text evidence="10">Ubiquitinated by SIAH1 and/or SIAH2 in response to the unfolded protein response (UPR), leading to its degradation.</text>
</comment>
<comment type="disruption phenotype">
    <text evidence="7 9">Null mice exhibit a lowering of oxygen consumption in skeletal muscle. Glucose oxidation is reduced to around 35%. Hypoxia tolerance is induced in myofibers.</text>
</comment>
<comment type="sequence caution" evidence="13">
    <conflict type="frameshift">
        <sequence resource="EMBL-CDS" id="CAC42516"/>
    </conflict>
</comment>
<sequence>MDSPCQPQALNQALPQLPGSVSESLESSRARMGVESYLPCPLLPAYHRPGASGEASAGNGTPRTTATATTTTASPLREGFGGQDGGELWPLQSEGAAALVTKECQRLAAQGARPEAPKRKWAKDGGDAPSPSKRPWARQENQEAKGESGMGCDSGASNSSSSSSNTTSSSGEASARLREEVQPSAPERLALDYIVPCMRYYGICVKDNFLGAVLGGRVLAEVEALKWGGRLRDGQLVSQRAIPPRSIRGDQIAWVEGHEPGCRSIGALMAHVDAVIRHCAGRLGNYVINGRTKAMVACYPGNGLGYVRHVDNPHGDGRCITCIYYLNQNWDVKVHGGLLQIFPEGRPVVANIEPLFDRLLIFWSDRRNPHEVKPAYATRYAITVWYFDAKERAAARDKYQLASGQKGVQVPVSQPTTPT</sequence>
<evidence type="ECO:0000250" key="1">
    <source>
        <dbReference type="UniProtKB" id="Q96KS0"/>
    </source>
</evidence>
<evidence type="ECO:0000250" key="2">
    <source>
        <dbReference type="UniProtKB" id="Q9GZT9"/>
    </source>
</evidence>
<evidence type="ECO:0000255" key="3">
    <source>
        <dbReference type="PROSITE-ProRule" id="PRU00805"/>
    </source>
</evidence>
<evidence type="ECO:0000256" key="4">
    <source>
        <dbReference type="SAM" id="MobiDB-lite"/>
    </source>
</evidence>
<evidence type="ECO:0000269" key="5">
    <source>
    </source>
</evidence>
<evidence type="ECO:0000269" key="6">
    <source>
    </source>
</evidence>
<evidence type="ECO:0000269" key="7">
    <source>
    </source>
</evidence>
<evidence type="ECO:0000269" key="8">
    <source>
    </source>
</evidence>
<evidence type="ECO:0000269" key="9">
    <source>
    </source>
</evidence>
<evidence type="ECO:0000269" key="10">
    <source>
    </source>
</evidence>
<evidence type="ECO:0000303" key="11">
    <source>
    </source>
</evidence>
<evidence type="ECO:0000303" key="12">
    <source>
    </source>
</evidence>
<evidence type="ECO:0000305" key="13"/>
<evidence type="ECO:0000305" key="14">
    <source>
    </source>
</evidence>
<evidence type="ECO:0000312" key="15">
    <source>
        <dbReference type="MGI" id="MGI:1932287"/>
    </source>
</evidence>